<dbReference type="EMBL" id="CP000108">
    <property type="protein sequence ID" value="ABB27729.1"/>
    <property type="molecule type" value="Genomic_DNA"/>
</dbReference>
<dbReference type="SMR" id="Q3ATE6"/>
<dbReference type="STRING" id="340177.Cag_0456"/>
<dbReference type="KEGG" id="cch:Cag_0456"/>
<dbReference type="eggNOG" id="COG0268">
    <property type="taxonomic scope" value="Bacteria"/>
</dbReference>
<dbReference type="HOGENOM" id="CLU_160655_3_1_10"/>
<dbReference type="OrthoDB" id="9808392at2"/>
<dbReference type="GO" id="GO:0005829">
    <property type="term" value="C:cytosol"/>
    <property type="evidence" value="ECO:0007669"/>
    <property type="project" value="TreeGrafter"/>
</dbReference>
<dbReference type="GO" id="GO:0015935">
    <property type="term" value="C:small ribosomal subunit"/>
    <property type="evidence" value="ECO:0007669"/>
    <property type="project" value="TreeGrafter"/>
</dbReference>
<dbReference type="GO" id="GO:0070181">
    <property type="term" value="F:small ribosomal subunit rRNA binding"/>
    <property type="evidence" value="ECO:0007669"/>
    <property type="project" value="TreeGrafter"/>
</dbReference>
<dbReference type="GO" id="GO:0003735">
    <property type="term" value="F:structural constituent of ribosome"/>
    <property type="evidence" value="ECO:0007669"/>
    <property type="project" value="InterPro"/>
</dbReference>
<dbReference type="GO" id="GO:0006412">
    <property type="term" value="P:translation"/>
    <property type="evidence" value="ECO:0007669"/>
    <property type="project" value="UniProtKB-UniRule"/>
</dbReference>
<dbReference type="Gene3D" id="1.20.58.110">
    <property type="entry name" value="Ribosomal protein S20"/>
    <property type="match status" value="1"/>
</dbReference>
<dbReference type="HAMAP" id="MF_00500">
    <property type="entry name" value="Ribosomal_bS20"/>
    <property type="match status" value="1"/>
</dbReference>
<dbReference type="InterPro" id="IPR002583">
    <property type="entry name" value="Ribosomal_bS20"/>
</dbReference>
<dbReference type="InterPro" id="IPR036510">
    <property type="entry name" value="Ribosomal_bS20_sf"/>
</dbReference>
<dbReference type="NCBIfam" id="TIGR00029">
    <property type="entry name" value="S20"/>
    <property type="match status" value="1"/>
</dbReference>
<dbReference type="PANTHER" id="PTHR33398">
    <property type="entry name" value="30S RIBOSOMAL PROTEIN S20"/>
    <property type="match status" value="1"/>
</dbReference>
<dbReference type="PANTHER" id="PTHR33398:SF1">
    <property type="entry name" value="SMALL RIBOSOMAL SUBUNIT PROTEIN BS20C"/>
    <property type="match status" value="1"/>
</dbReference>
<dbReference type="Pfam" id="PF01649">
    <property type="entry name" value="Ribosomal_S20p"/>
    <property type="match status" value="1"/>
</dbReference>
<dbReference type="SUPFAM" id="SSF46992">
    <property type="entry name" value="Ribosomal protein S20"/>
    <property type="match status" value="1"/>
</dbReference>
<proteinExistence type="inferred from homology"/>
<name>RS20_CHLCH</name>
<reference key="1">
    <citation type="submission" date="2005-08" db="EMBL/GenBank/DDBJ databases">
        <title>Complete sequence of Chlorobium chlorochromatii CaD3.</title>
        <authorList>
            <consortium name="US DOE Joint Genome Institute"/>
            <person name="Copeland A."/>
            <person name="Lucas S."/>
            <person name="Lapidus A."/>
            <person name="Barry K."/>
            <person name="Detter J.C."/>
            <person name="Glavina T."/>
            <person name="Hammon N."/>
            <person name="Israni S."/>
            <person name="Pitluck S."/>
            <person name="Bryant D."/>
            <person name="Schmutz J."/>
            <person name="Larimer F."/>
            <person name="Land M."/>
            <person name="Kyrpides N."/>
            <person name="Ivanova N."/>
            <person name="Richardson P."/>
        </authorList>
    </citation>
    <scope>NUCLEOTIDE SEQUENCE [LARGE SCALE GENOMIC DNA]</scope>
    <source>
        <strain>CaD3</strain>
    </source>
</reference>
<protein>
    <recommendedName>
        <fullName evidence="1">Small ribosomal subunit protein bS20</fullName>
    </recommendedName>
    <alternativeName>
        <fullName evidence="3">30S ribosomal protein S20</fullName>
    </alternativeName>
</protein>
<gene>
    <name evidence="1" type="primary">rpsT</name>
    <name type="ordered locus">Cag_0456</name>
</gene>
<evidence type="ECO:0000255" key="1">
    <source>
        <dbReference type="HAMAP-Rule" id="MF_00500"/>
    </source>
</evidence>
<evidence type="ECO:0000256" key="2">
    <source>
        <dbReference type="SAM" id="MobiDB-lite"/>
    </source>
</evidence>
<evidence type="ECO:0000305" key="3"/>
<comment type="function">
    <text evidence="1">Binds directly to 16S ribosomal RNA.</text>
</comment>
<comment type="similarity">
    <text evidence="1">Belongs to the bacterial ribosomal protein bS20 family.</text>
</comment>
<feature type="chain" id="PRO_0000236431" description="Small ribosomal subunit protein bS20">
    <location>
        <begin position="1"/>
        <end position="93"/>
    </location>
</feature>
<feature type="region of interest" description="Disordered" evidence="2">
    <location>
        <begin position="1"/>
        <end position="25"/>
    </location>
</feature>
<feature type="compositionally biased region" description="Basic and acidic residues" evidence="2">
    <location>
        <begin position="1"/>
        <end position="18"/>
    </location>
</feature>
<sequence>MPLHKSAEKRLRQSEKRNARNRARKKELKVLVKTMQKLIEASAAKPEVETAYRSVVQKLDRLGVKRYIHANKASRKKSQITRDFNTYMQSAQQ</sequence>
<accession>Q3ATE6</accession>
<organism>
    <name type="scientific">Chlorobium chlorochromatii (strain CaD3)</name>
    <dbReference type="NCBI Taxonomy" id="340177"/>
    <lineage>
        <taxon>Bacteria</taxon>
        <taxon>Pseudomonadati</taxon>
        <taxon>Chlorobiota</taxon>
        <taxon>Chlorobiia</taxon>
        <taxon>Chlorobiales</taxon>
        <taxon>Chlorobiaceae</taxon>
        <taxon>Chlorobium/Pelodictyon group</taxon>
        <taxon>Chlorobium</taxon>
    </lineage>
</organism>
<keyword id="KW-0687">Ribonucleoprotein</keyword>
<keyword id="KW-0689">Ribosomal protein</keyword>
<keyword id="KW-0694">RNA-binding</keyword>
<keyword id="KW-0699">rRNA-binding</keyword>